<proteinExistence type="inferred from homology"/>
<organism>
    <name type="scientific">Bacillus anthracis (strain A0248)</name>
    <dbReference type="NCBI Taxonomy" id="592021"/>
    <lineage>
        <taxon>Bacteria</taxon>
        <taxon>Bacillati</taxon>
        <taxon>Bacillota</taxon>
        <taxon>Bacilli</taxon>
        <taxon>Bacillales</taxon>
        <taxon>Bacillaceae</taxon>
        <taxon>Bacillus</taxon>
        <taxon>Bacillus cereus group</taxon>
    </lineage>
</organism>
<gene>
    <name evidence="1" type="primary">thiE</name>
    <name type="ordered locus">BAA_0440</name>
</gene>
<name>THIE_BACAA</name>
<dbReference type="EC" id="2.5.1.3" evidence="1"/>
<dbReference type="EMBL" id="CP001598">
    <property type="protein sequence ID" value="ACQ50807.1"/>
    <property type="molecule type" value="Genomic_DNA"/>
</dbReference>
<dbReference type="RefSeq" id="WP_000086975.1">
    <property type="nucleotide sequence ID" value="NC_012659.1"/>
</dbReference>
<dbReference type="SMR" id="C3PBW1"/>
<dbReference type="GeneID" id="45020436"/>
<dbReference type="KEGG" id="bai:BAA_0440"/>
<dbReference type="HOGENOM" id="CLU_018272_3_2_9"/>
<dbReference type="UniPathway" id="UPA00060">
    <property type="reaction ID" value="UER00141"/>
</dbReference>
<dbReference type="GO" id="GO:0005737">
    <property type="term" value="C:cytoplasm"/>
    <property type="evidence" value="ECO:0007669"/>
    <property type="project" value="TreeGrafter"/>
</dbReference>
<dbReference type="GO" id="GO:0000287">
    <property type="term" value="F:magnesium ion binding"/>
    <property type="evidence" value="ECO:0007669"/>
    <property type="project" value="UniProtKB-UniRule"/>
</dbReference>
<dbReference type="GO" id="GO:0004789">
    <property type="term" value="F:thiamine-phosphate diphosphorylase activity"/>
    <property type="evidence" value="ECO:0007669"/>
    <property type="project" value="UniProtKB-UniRule"/>
</dbReference>
<dbReference type="GO" id="GO:0009228">
    <property type="term" value="P:thiamine biosynthetic process"/>
    <property type="evidence" value="ECO:0007669"/>
    <property type="project" value="UniProtKB-KW"/>
</dbReference>
<dbReference type="GO" id="GO:0009229">
    <property type="term" value="P:thiamine diphosphate biosynthetic process"/>
    <property type="evidence" value="ECO:0007669"/>
    <property type="project" value="UniProtKB-UniRule"/>
</dbReference>
<dbReference type="CDD" id="cd00564">
    <property type="entry name" value="TMP_TenI"/>
    <property type="match status" value="1"/>
</dbReference>
<dbReference type="FunFam" id="3.20.20.70:FF:000096">
    <property type="entry name" value="Thiamine-phosphate synthase"/>
    <property type="match status" value="1"/>
</dbReference>
<dbReference type="Gene3D" id="3.20.20.70">
    <property type="entry name" value="Aldolase class I"/>
    <property type="match status" value="1"/>
</dbReference>
<dbReference type="HAMAP" id="MF_00097">
    <property type="entry name" value="TMP_synthase"/>
    <property type="match status" value="1"/>
</dbReference>
<dbReference type="InterPro" id="IPR013785">
    <property type="entry name" value="Aldolase_TIM"/>
</dbReference>
<dbReference type="InterPro" id="IPR036206">
    <property type="entry name" value="ThiamineP_synth_sf"/>
</dbReference>
<dbReference type="InterPro" id="IPR022998">
    <property type="entry name" value="ThiamineP_synth_TenI"/>
</dbReference>
<dbReference type="InterPro" id="IPR034291">
    <property type="entry name" value="TMP_synthase"/>
</dbReference>
<dbReference type="NCBIfam" id="TIGR00693">
    <property type="entry name" value="thiE"/>
    <property type="match status" value="1"/>
</dbReference>
<dbReference type="PANTHER" id="PTHR20857">
    <property type="entry name" value="THIAMINE-PHOSPHATE PYROPHOSPHORYLASE"/>
    <property type="match status" value="1"/>
</dbReference>
<dbReference type="PANTHER" id="PTHR20857:SF15">
    <property type="entry name" value="THIAMINE-PHOSPHATE SYNTHASE"/>
    <property type="match status" value="1"/>
</dbReference>
<dbReference type="Pfam" id="PF02581">
    <property type="entry name" value="TMP-TENI"/>
    <property type="match status" value="1"/>
</dbReference>
<dbReference type="SUPFAM" id="SSF51391">
    <property type="entry name" value="Thiamin phosphate synthase"/>
    <property type="match status" value="1"/>
</dbReference>
<comment type="function">
    <text evidence="1">Condenses 4-methyl-5-(beta-hydroxyethyl)thiazole monophosphate (THZ-P) and 2-methyl-4-amino-5-hydroxymethyl pyrimidine pyrophosphate (HMP-PP) to form thiamine monophosphate (TMP).</text>
</comment>
<comment type="catalytic activity">
    <reaction evidence="1">
        <text>2-[(2R,5Z)-2-carboxy-4-methylthiazol-5(2H)-ylidene]ethyl phosphate + 4-amino-2-methyl-5-(diphosphooxymethyl)pyrimidine + 2 H(+) = thiamine phosphate + CO2 + diphosphate</text>
        <dbReference type="Rhea" id="RHEA:47844"/>
        <dbReference type="ChEBI" id="CHEBI:15378"/>
        <dbReference type="ChEBI" id="CHEBI:16526"/>
        <dbReference type="ChEBI" id="CHEBI:33019"/>
        <dbReference type="ChEBI" id="CHEBI:37575"/>
        <dbReference type="ChEBI" id="CHEBI:57841"/>
        <dbReference type="ChEBI" id="CHEBI:62899"/>
        <dbReference type="EC" id="2.5.1.3"/>
    </reaction>
</comment>
<comment type="catalytic activity">
    <reaction evidence="1">
        <text>2-(2-carboxy-4-methylthiazol-5-yl)ethyl phosphate + 4-amino-2-methyl-5-(diphosphooxymethyl)pyrimidine + 2 H(+) = thiamine phosphate + CO2 + diphosphate</text>
        <dbReference type="Rhea" id="RHEA:47848"/>
        <dbReference type="ChEBI" id="CHEBI:15378"/>
        <dbReference type="ChEBI" id="CHEBI:16526"/>
        <dbReference type="ChEBI" id="CHEBI:33019"/>
        <dbReference type="ChEBI" id="CHEBI:37575"/>
        <dbReference type="ChEBI" id="CHEBI:57841"/>
        <dbReference type="ChEBI" id="CHEBI:62890"/>
        <dbReference type="EC" id="2.5.1.3"/>
    </reaction>
</comment>
<comment type="catalytic activity">
    <reaction evidence="1">
        <text>4-methyl-5-(2-phosphooxyethyl)-thiazole + 4-amino-2-methyl-5-(diphosphooxymethyl)pyrimidine + H(+) = thiamine phosphate + diphosphate</text>
        <dbReference type="Rhea" id="RHEA:22328"/>
        <dbReference type="ChEBI" id="CHEBI:15378"/>
        <dbReference type="ChEBI" id="CHEBI:33019"/>
        <dbReference type="ChEBI" id="CHEBI:37575"/>
        <dbReference type="ChEBI" id="CHEBI:57841"/>
        <dbReference type="ChEBI" id="CHEBI:58296"/>
        <dbReference type="EC" id="2.5.1.3"/>
    </reaction>
</comment>
<comment type="cofactor">
    <cofactor evidence="1">
        <name>Mg(2+)</name>
        <dbReference type="ChEBI" id="CHEBI:18420"/>
    </cofactor>
    <text evidence="1">Binds 1 Mg(2+) ion per subunit.</text>
</comment>
<comment type="pathway">
    <text evidence="1">Cofactor biosynthesis; thiamine diphosphate biosynthesis; thiamine phosphate from 4-amino-2-methyl-5-diphosphomethylpyrimidine and 4-methyl-5-(2-phosphoethyl)-thiazole: step 1/1.</text>
</comment>
<comment type="similarity">
    <text evidence="1">Belongs to the thiamine-phosphate synthase family.</text>
</comment>
<feature type="chain" id="PRO_1000198071" description="Thiamine-phosphate synthase">
    <location>
        <begin position="1"/>
        <end position="219"/>
    </location>
</feature>
<feature type="binding site" evidence="1">
    <location>
        <begin position="44"/>
        <end position="48"/>
    </location>
    <ligand>
        <name>4-amino-2-methyl-5-(diphosphooxymethyl)pyrimidine</name>
        <dbReference type="ChEBI" id="CHEBI:57841"/>
    </ligand>
</feature>
<feature type="binding site" evidence="1">
    <location>
        <position position="79"/>
    </location>
    <ligand>
        <name>4-amino-2-methyl-5-(diphosphooxymethyl)pyrimidine</name>
        <dbReference type="ChEBI" id="CHEBI:57841"/>
    </ligand>
</feature>
<feature type="binding site" evidence="1">
    <location>
        <position position="80"/>
    </location>
    <ligand>
        <name>Mg(2+)</name>
        <dbReference type="ChEBI" id="CHEBI:18420"/>
    </ligand>
</feature>
<feature type="binding site" evidence="1">
    <location>
        <position position="99"/>
    </location>
    <ligand>
        <name>Mg(2+)</name>
        <dbReference type="ChEBI" id="CHEBI:18420"/>
    </ligand>
</feature>
<feature type="binding site" evidence="1">
    <location>
        <position position="117"/>
    </location>
    <ligand>
        <name>4-amino-2-methyl-5-(diphosphooxymethyl)pyrimidine</name>
        <dbReference type="ChEBI" id="CHEBI:57841"/>
    </ligand>
</feature>
<feature type="binding site" evidence="1">
    <location>
        <begin position="143"/>
        <end position="145"/>
    </location>
    <ligand>
        <name>2-[(2R,5Z)-2-carboxy-4-methylthiazol-5(2H)-ylidene]ethyl phosphate</name>
        <dbReference type="ChEBI" id="CHEBI:62899"/>
    </ligand>
</feature>
<feature type="binding site" evidence="1">
    <location>
        <position position="146"/>
    </location>
    <ligand>
        <name>4-amino-2-methyl-5-(diphosphooxymethyl)pyrimidine</name>
        <dbReference type="ChEBI" id="CHEBI:57841"/>
    </ligand>
</feature>
<feature type="binding site" evidence="1">
    <location>
        <position position="175"/>
    </location>
    <ligand>
        <name>2-[(2R,5Z)-2-carboxy-4-methylthiazol-5(2H)-ylidene]ethyl phosphate</name>
        <dbReference type="ChEBI" id="CHEBI:62899"/>
    </ligand>
</feature>
<feature type="binding site" evidence="1">
    <location>
        <begin position="195"/>
        <end position="196"/>
    </location>
    <ligand>
        <name>2-[(2R,5Z)-2-carboxy-4-methylthiazol-5(2H)-ylidene]ethyl phosphate</name>
        <dbReference type="ChEBI" id="CHEBI:62899"/>
    </ligand>
</feature>
<protein>
    <recommendedName>
        <fullName evidence="1">Thiamine-phosphate synthase</fullName>
        <shortName evidence="1">TP synthase</shortName>
        <shortName evidence="1">TPS</shortName>
        <ecNumber evidence="1">2.5.1.3</ecNumber>
    </recommendedName>
    <alternativeName>
        <fullName evidence="1">Thiamine-phosphate pyrophosphorylase</fullName>
        <shortName evidence="1">TMP pyrophosphorylase</shortName>
        <shortName evidence="1">TMP-PPase</shortName>
    </alternativeName>
</protein>
<evidence type="ECO:0000255" key="1">
    <source>
        <dbReference type="HAMAP-Rule" id="MF_00097"/>
    </source>
</evidence>
<reference key="1">
    <citation type="submission" date="2009-04" db="EMBL/GenBank/DDBJ databases">
        <title>Genome sequence of Bacillus anthracis A0248.</title>
        <authorList>
            <person name="Dodson R.J."/>
            <person name="Munk A.C."/>
            <person name="Bruce D."/>
            <person name="Detter C."/>
            <person name="Tapia R."/>
            <person name="Sutton G."/>
            <person name="Sims D."/>
            <person name="Brettin T."/>
        </authorList>
    </citation>
    <scope>NUCLEOTIDE SEQUENCE [LARGE SCALE GENOMIC DNA]</scope>
    <source>
        <strain>A0248</strain>
    </source>
</reference>
<sequence length="219" mass="23600">MSRISKAEMSKLLSVYFIMGSNNCTKDPLQVLREALEGFITIFQFREKGEGALTGEERICFAKELQAICKEYGVPFIVNDDVELALELDADGVHVGQDDEGITSVREKMGDKIVGVSTHTIEEARWVIENGADYLGVGPIFPTSTKKDTKAVQGTKGLAHFREQGITIPIVGIGGISIENTASVIEAGADGVSVISAISLAESAYESTKKLVEEVSRSL</sequence>
<keyword id="KW-0460">Magnesium</keyword>
<keyword id="KW-0479">Metal-binding</keyword>
<keyword id="KW-0784">Thiamine biosynthesis</keyword>
<keyword id="KW-0808">Transferase</keyword>
<accession>C3PBW1</accession>